<protein>
    <recommendedName>
        <fullName evidence="1">Small ribosomal subunit protein bS18B</fullName>
    </recommendedName>
    <alternativeName>
        <fullName evidence="2">30S ribosomal protein S18 2</fullName>
    </alternativeName>
</protein>
<name>RS182_STRGG</name>
<proteinExistence type="inferred from homology"/>
<accession>B1VPC2</accession>
<sequence>MAKPPVRKPKKKVCAFCKDKTQYVDYKDTNMLRKFISDRGKIRARRVTGNCTQHQRDVATAVKNSREMALLPYTSTAR</sequence>
<evidence type="ECO:0000255" key="1">
    <source>
        <dbReference type="HAMAP-Rule" id="MF_00270"/>
    </source>
</evidence>
<evidence type="ECO:0000305" key="2"/>
<dbReference type="EMBL" id="AP009493">
    <property type="protein sequence ID" value="BAG20501.1"/>
    <property type="molecule type" value="Genomic_DNA"/>
</dbReference>
<dbReference type="SMR" id="B1VPC2"/>
<dbReference type="KEGG" id="sgr:SGR_3672"/>
<dbReference type="eggNOG" id="COG0238">
    <property type="taxonomic scope" value="Bacteria"/>
</dbReference>
<dbReference type="HOGENOM" id="CLU_148710_2_2_11"/>
<dbReference type="Proteomes" id="UP000001685">
    <property type="component" value="Chromosome"/>
</dbReference>
<dbReference type="GO" id="GO:0022627">
    <property type="term" value="C:cytosolic small ribosomal subunit"/>
    <property type="evidence" value="ECO:0007669"/>
    <property type="project" value="TreeGrafter"/>
</dbReference>
<dbReference type="GO" id="GO:0070181">
    <property type="term" value="F:small ribosomal subunit rRNA binding"/>
    <property type="evidence" value="ECO:0007669"/>
    <property type="project" value="TreeGrafter"/>
</dbReference>
<dbReference type="GO" id="GO:0003735">
    <property type="term" value="F:structural constituent of ribosome"/>
    <property type="evidence" value="ECO:0007669"/>
    <property type="project" value="InterPro"/>
</dbReference>
<dbReference type="GO" id="GO:0006412">
    <property type="term" value="P:translation"/>
    <property type="evidence" value="ECO:0007669"/>
    <property type="project" value="UniProtKB-UniRule"/>
</dbReference>
<dbReference type="FunFam" id="4.10.640.10:FF:000004">
    <property type="entry name" value="30S ribosomal protein S18"/>
    <property type="match status" value="1"/>
</dbReference>
<dbReference type="Gene3D" id="4.10.640.10">
    <property type="entry name" value="Ribosomal protein S18"/>
    <property type="match status" value="1"/>
</dbReference>
<dbReference type="HAMAP" id="MF_00270">
    <property type="entry name" value="Ribosomal_bS18"/>
    <property type="match status" value="1"/>
</dbReference>
<dbReference type="InterPro" id="IPR001648">
    <property type="entry name" value="Ribosomal_bS18"/>
</dbReference>
<dbReference type="InterPro" id="IPR018275">
    <property type="entry name" value="Ribosomal_bS18_CS"/>
</dbReference>
<dbReference type="InterPro" id="IPR036870">
    <property type="entry name" value="Ribosomal_bS18_sf"/>
</dbReference>
<dbReference type="NCBIfam" id="TIGR00165">
    <property type="entry name" value="S18"/>
    <property type="match status" value="1"/>
</dbReference>
<dbReference type="PANTHER" id="PTHR13479">
    <property type="entry name" value="30S RIBOSOMAL PROTEIN S18"/>
    <property type="match status" value="1"/>
</dbReference>
<dbReference type="PANTHER" id="PTHR13479:SF62">
    <property type="entry name" value="SMALL RIBOSOMAL SUBUNIT PROTEIN BS18A"/>
    <property type="match status" value="1"/>
</dbReference>
<dbReference type="Pfam" id="PF01084">
    <property type="entry name" value="Ribosomal_S18"/>
    <property type="match status" value="1"/>
</dbReference>
<dbReference type="PRINTS" id="PR00974">
    <property type="entry name" value="RIBOSOMALS18"/>
</dbReference>
<dbReference type="SUPFAM" id="SSF46911">
    <property type="entry name" value="Ribosomal protein S18"/>
    <property type="match status" value="1"/>
</dbReference>
<dbReference type="PROSITE" id="PS00057">
    <property type="entry name" value="RIBOSOMAL_S18"/>
    <property type="match status" value="1"/>
</dbReference>
<comment type="function">
    <text evidence="1">Binds as a heterodimer with protein bS6 to the central domain of the 16S rRNA, where it helps stabilize the platform of the 30S subunit.</text>
</comment>
<comment type="subunit">
    <text evidence="1">Part of the 30S ribosomal subunit. Forms a tight heterodimer with protein bS6.</text>
</comment>
<comment type="similarity">
    <text evidence="1">Belongs to the bacterial ribosomal protein bS18 family.</text>
</comment>
<organism>
    <name type="scientific">Streptomyces griseus subsp. griseus (strain JCM 4626 / CBS 651.72 / NBRC 13350 / KCC S-0626 / ISP 5235)</name>
    <dbReference type="NCBI Taxonomy" id="455632"/>
    <lineage>
        <taxon>Bacteria</taxon>
        <taxon>Bacillati</taxon>
        <taxon>Actinomycetota</taxon>
        <taxon>Actinomycetes</taxon>
        <taxon>Kitasatosporales</taxon>
        <taxon>Streptomycetaceae</taxon>
        <taxon>Streptomyces</taxon>
    </lineage>
</organism>
<reference key="1">
    <citation type="journal article" date="2008" name="J. Bacteriol.">
        <title>Genome sequence of the streptomycin-producing microorganism Streptomyces griseus IFO 13350.</title>
        <authorList>
            <person name="Ohnishi Y."/>
            <person name="Ishikawa J."/>
            <person name="Hara H."/>
            <person name="Suzuki H."/>
            <person name="Ikenoya M."/>
            <person name="Ikeda H."/>
            <person name="Yamashita A."/>
            <person name="Hattori M."/>
            <person name="Horinouchi S."/>
        </authorList>
    </citation>
    <scope>NUCLEOTIDE SEQUENCE [LARGE SCALE GENOMIC DNA]</scope>
    <source>
        <strain>JCM 4626 / CBS 651.72 / NBRC 13350 / KCC S-0626 / ISP 5235</strain>
    </source>
</reference>
<gene>
    <name evidence="1" type="primary">rpsR2</name>
    <name type="ordered locus">SGR_3672</name>
</gene>
<feature type="chain" id="PRO_0000345550" description="Small ribosomal subunit protein bS18B">
    <location>
        <begin position="1"/>
        <end position="78"/>
    </location>
</feature>
<keyword id="KW-0687">Ribonucleoprotein</keyword>
<keyword id="KW-0689">Ribosomal protein</keyword>
<keyword id="KW-0694">RNA-binding</keyword>
<keyword id="KW-0699">rRNA-binding</keyword>